<dbReference type="EC" id="4.1.1.48" evidence="1"/>
<dbReference type="EMBL" id="AE016825">
    <property type="protein sequence ID" value="AAQ60382.1"/>
    <property type="molecule type" value="Genomic_DNA"/>
</dbReference>
<dbReference type="RefSeq" id="WP_011136259.1">
    <property type="nucleotide sequence ID" value="NC_005085.1"/>
</dbReference>
<dbReference type="SMR" id="Q7NUI6"/>
<dbReference type="STRING" id="243365.CV_2712"/>
<dbReference type="KEGG" id="cvi:CV_2712"/>
<dbReference type="eggNOG" id="COG0134">
    <property type="taxonomic scope" value="Bacteria"/>
</dbReference>
<dbReference type="HOGENOM" id="CLU_034247_2_0_4"/>
<dbReference type="OrthoDB" id="9804217at2"/>
<dbReference type="UniPathway" id="UPA00035">
    <property type="reaction ID" value="UER00043"/>
</dbReference>
<dbReference type="Proteomes" id="UP000001424">
    <property type="component" value="Chromosome"/>
</dbReference>
<dbReference type="GO" id="GO:0004425">
    <property type="term" value="F:indole-3-glycerol-phosphate synthase activity"/>
    <property type="evidence" value="ECO:0007669"/>
    <property type="project" value="UniProtKB-UniRule"/>
</dbReference>
<dbReference type="GO" id="GO:0004640">
    <property type="term" value="F:phosphoribosylanthranilate isomerase activity"/>
    <property type="evidence" value="ECO:0007669"/>
    <property type="project" value="TreeGrafter"/>
</dbReference>
<dbReference type="GO" id="GO:0000162">
    <property type="term" value="P:L-tryptophan biosynthetic process"/>
    <property type="evidence" value="ECO:0007669"/>
    <property type="project" value="UniProtKB-UniRule"/>
</dbReference>
<dbReference type="CDD" id="cd00331">
    <property type="entry name" value="IGPS"/>
    <property type="match status" value="1"/>
</dbReference>
<dbReference type="FunFam" id="3.20.20.70:FF:000024">
    <property type="entry name" value="Indole-3-glycerol phosphate synthase"/>
    <property type="match status" value="1"/>
</dbReference>
<dbReference type="Gene3D" id="3.20.20.70">
    <property type="entry name" value="Aldolase class I"/>
    <property type="match status" value="1"/>
</dbReference>
<dbReference type="HAMAP" id="MF_00134_B">
    <property type="entry name" value="IGPS_B"/>
    <property type="match status" value="1"/>
</dbReference>
<dbReference type="InterPro" id="IPR013785">
    <property type="entry name" value="Aldolase_TIM"/>
</dbReference>
<dbReference type="InterPro" id="IPR045186">
    <property type="entry name" value="Indole-3-glycerol_P_synth"/>
</dbReference>
<dbReference type="InterPro" id="IPR013798">
    <property type="entry name" value="Indole-3-glycerol_P_synth_dom"/>
</dbReference>
<dbReference type="InterPro" id="IPR001468">
    <property type="entry name" value="Indole-3-GlycerolPSynthase_CS"/>
</dbReference>
<dbReference type="InterPro" id="IPR011060">
    <property type="entry name" value="RibuloseP-bd_barrel"/>
</dbReference>
<dbReference type="NCBIfam" id="NF001370">
    <property type="entry name" value="PRK00278.1-2"/>
    <property type="match status" value="1"/>
</dbReference>
<dbReference type="NCBIfam" id="NF001373">
    <property type="entry name" value="PRK00278.1-6"/>
    <property type="match status" value="1"/>
</dbReference>
<dbReference type="NCBIfam" id="NF001377">
    <property type="entry name" value="PRK00278.2-4"/>
    <property type="match status" value="1"/>
</dbReference>
<dbReference type="PANTHER" id="PTHR22854:SF2">
    <property type="entry name" value="INDOLE-3-GLYCEROL-PHOSPHATE SYNTHASE"/>
    <property type="match status" value="1"/>
</dbReference>
<dbReference type="PANTHER" id="PTHR22854">
    <property type="entry name" value="TRYPTOPHAN BIOSYNTHESIS PROTEIN"/>
    <property type="match status" value="1"/>
</dbReference>
<dbReference type="Pfam" id="PF00218">
    <property type="entry name" value="IGPS"/>
    <property type="match status" value="1"/>
</dbReference>
<dbReference type="SUPFAM" id="SSF51366">
    <property type="entry name" value="Ribulose-phoshate binding barrel"/>
    <property type="match status" value="1"/>
</dbReference>
<dbReference type="PROSITE" id="PS00614">
    <property type="entry name" value="IGPS"/>
    <property type="match status" value="1"/>
</dbReference>
<keyword id="KW-0028">Amino-acid biosynthesis</keyword>
<keyword id="KW-0057">Aromatic amino acid biosynthesis</keyword>
<keyword id="KW-0210">Decarboxylase</keyword>
<keyword id="KW-0456">Lyase</keyword>
<keyword id="KW-1185">Reference proteome</keyword>
<keyword id="KW-0822">Tryptophan biosynthesis</keyword>
<organism>
    <name type="scientific">Chromobacterium violaceum (strain ATCC 12472 / DSM 30191 / JCM 1249 / CCUG 213 / NBRC 12614 / NCIMB 9131 / NCTC 9757 / MK)</name>
    <dbReference type="NCBI Taxonomy" id="243365"/>
    <lineage>
        <taxon>Bacteria</taxon>
        <taxon>Pseudomonadati</taxon>
        <taxon>Pseudomonadota</taxon>
        <taxon>Betaproteobacteria</taxon>
        <taxon>Neisseriales</taxon>
        <taxon>Chromobacteriaceae</taxon>
        <taxon>Chromobacterium</taxon>
    </lineage>
</organism>
<comment type="catalytic activity">
    <reaction evidence="1">
        <text>1-(2-carboxyphenylamino)-1-deoxy-D-ribulose 5-phosphate + H(+) = (1S,2R)-1-C-(indol-3-yl)glycerol 3-phosphate + CO2 + H2O</text>
        <dbReference type="Rhea" id="RHEA:23476"/>
        <dbReference type="ChEBI" id="CHEBI:15377"/>
        <dbReference type="ChEBI" id="CHEBI:15378"/>
        <dbReference type="ChEBI" id="CHEBI:16526"/>
        <dbReference type="ChEBI" id="CHEBI:58613"/>
        <dbReference type="ChEBI" id="CHEBI:58866"/>
        <dbReference type="EC" id="4.1.1.48"/>
    </reaction>
</comment>
<comment type="pathway">
    <text evidence="1">Amino-acid biosynthesis; L-tryptophan biosynthesis; L-tryptophan from chorismate: step 4/5.</text>
</comment>
<comment type="similarity">
    <text evidence="1">Belongs to the TrpC family.</text>
</comment>
<name>TRPC_CHRVO</name>
<gene>
    <name evidence="1" type="primary">trpC</name>
    <name type="ordered locus">CV_2712</name>
</gene>
<reference key="1">
    <citation type="journal article" date="2003" name="Proc. Natl. Acad. Sci. U.S.A.">
        <title>The complete genome sequence of Chromobacterium violaceum reveals remarkable and exploitable bacterial adaptability.</title>
        <authorList>
            <person name="Vasconcelos A.T.R."/>
            <person name="de Almeida D.F."/>
            <person name="Hungria M."/>
            <person name="Guimaraes C.T."/>
            <person name="Antonio R.V."/>
            <person name="Almeida F.C."/>
            <person name="de Almeida L.G.P."/>
            <person name="de Almeida R."/>
            <person name="Alves-Gomes J.A."/>
            <person name="Andrade E.M."/>
            <person name="Araripe J."/>
            <person name="de Araujo M.F.F."/>
            <person name="Astolfi-Filho S."/>
            <person name="Azevedo V."/>
            <person name="Baptista A.J."/>
            <person name="Bataus L.A.M."/>
            <person name="Batista J.S."/>
            <person name="Belo A."/>
            <person name="van den Berg C."/>
            <person name="Bogo M."/>
            <person name="Bonatto S."/>
            <person name="Bordignon J."/>
            <person name="Brigido M.M."/>
            <person name="Brito C.A."/>
            <person name="Brocchi M."/>
            <person name="Burity H.A."/>
            <person name="Camargo A.A."/>
            <person name="Cardoso D.D.P."/>
            <person name="Carneiro N.P."/>
            <person name="Carraro D.M."/>
            <person name="Carvalho C.M.B."/>
            <person name="Cascardo J.C.M."/>
            <person name="Cavada B.S."/>
            <person name="Chueire L.M.O."/>
            <person name="Creczynski-Pasa T.B."/>
            <person name="Cunha-Junior N.C."/>
            <person name="Fagundes N."/>
            <person name="Falcao C.L."/>
            <person name="Fantinatti F."/>
            <person name="Farias I.P."/>
            <person name="Felipe M.S.S."/>
            <person name="Ferrari L.P."/>
            <person name="Ferro J.A."/>
            <person name="Ferro M.I.T."/>
            <person name="Franco G.R."/>
            <person name="Freitas N.S.A."/>
            <person name="Furlan L.R."/>
            <person name="Gazzinelli R.T."/>
            <person name="Gomes E.A."/>
            <person name="Goncalves P.R."/>
            <person name="Grangeiro T.B."/>
            <person name="Grattapaglia D."/>
            <person name="Grisard E.C."/>
            <person name="Hanna E.S."/>
            <person name="Jardim S.N."/>
            <person name="Laurino J."/>
            <person name="Leoi L.C.T."/>
            <person name="Lima L.F.A."/>
            <person name="Loureiro M.F."/>
            <person name="Lyra M.C.C.P."/>
            <person name="Madeira H.M.F."/>
            <person name="Manfio G.P."/>
            <person name="Maranhao A.Q."/>
            <person name="Martins W.S."/>
            <person name="di Mauro S.M.Z."/>
            <person name="de Medeiros S.R.B."/>
            <person name="Meissner R.V."/>
            <person name="Moreira M.A.M."/>
            <person name="Nascimento F.F."/>
            <person name="Nicolas M.F."/>
            <person name="Oliveira J.G."/>
            <person name="Oliveira S.C."/>
            <person name="Paixao R.F.C."/>
            <person name="Parente J.A."/>
            <person name="Pedrosa F.O."/>
            <person name="Pena S.D.J."/>
            <person name="Pereira J.O."/>
            <person name="Pereira M."/>
            <person name="Pinto L.S.R.C."/>
            <person name="Pinto L.S."/>
            <person name="Porto J.I.R."/>
            <person name="Potrich D.P."/>
            <person name="Ramalho-Neto C.E."/>
            <person name="Reis A.M.M."/>
            <person name="Rigo L.U."/>
            <person name="Rondinelli E."/>
            <person name="Santos E.B.P."/>
            <person name="Santos F.R."/>
            <person name="Schneider M.P.C."/>
            <person name="Seuanez H.N."/>
            <person name="Silva A.M.R."/>
            <person name="da Silva A.L.C."/>
            <person name="Silva D.W."/>
            <person name="Silva R."/>
            <person name="Simoes I.C."/>
            <person name="Simon D."/>
            <person name="Soares C.M.A."/>
            <person name="Soares R.B.A."/>
            <person name="Souza E.M."/>
            <person name="Souza K.R.L."/>
            <person name="Souza R.C."/>
            <person name="Steffens M.B.R."/>
            <person name="Steindel M."/>
            <person name="Teixeira S.R."/>
            <person name="Urmenyi T."/>
            <person name="Vettore A."/>
            <person name="Wassem R."/>
            <person name="Zaha A."/>
            <person name="Simpson A.J.G."/>
        </authorList>
    </citation>
    <scope>NUCLEOTIDE SEQUENCE [LARGE SCALE GENOMIC DNA]</scope>
    <source>
        <strain>ATCC 12472 / DSM 30191 / JCM 1249 / CCUG 213 / NBRC 12614 / NCIMB 9131 / NCTC 9757 / MK</strain>
    </source>
</reference>
<evidence type="ECO:0000255" key="1">
    <source>
        <dbReference type="HAMAP-Rule" id="MF_00134"/>
    </source>
</evidence>
<proteinExistence type="inferred from homology"/>
<sequence>MSDILNTIIATKHQEIAAALASRPLAAVRADAEARGDRRDFVAALRAKHALGKAAVIAEVKKASPSKGVIREDFQPAAIAESYAAHGAACLSVLTDRQYFQGDARYLEDARAACHLPALRKDFIVDEYQVYEARAMGADCILLIAAALELPKMKALEALANELGMAVLVEVHNEEELDAALQLKTELVGVNNRNLRTFEVSLATTLKLLPRITDGRIAVTESGIATVEDVRLMQASGVHTFLVGEAFMREAEPGEALSRLFFAQS</sequence>
<accession>Q7NUI6</accession>
<feature type="chain" id="PRO_1000018474" description="Indole-3-glycerol phosphate synthase">
    <location>
        <begin position="1"/>
        <end position="265"/>
    </location>
</feature>
<protein>
    <recommendedName>
        <fullName evidence="1">Indole-3-glycerol phosphate synthase</fullName>
        <shortName evidence="1">IGPS</shortName>
        <ecNumber evidence="1">4.1.1.48</ecNumber>
    </recommendedName>
</protein>